<keyword id="KW-0024">Alternative initiation</keyword>
<keyword id="KW-0056">Arginine metabolism</keyword>
<keyword id="KW-0963">Cytoplasm</keyword>
<keyword id="KW-0378">Hydrolase</keyword>
<keyword id="KW-0464">Manganese</keyword>
<keyword id="KW-0479">Metal-binding</keyword>
<keyword id="KW-1185">Reference proteome</keyword>
<gene>
    <name type="primary">aga-1</name>
    <name type="synonym">aga</name>
    <name type="synonym">car1</name>
    <name type="ORF">NCU02333</name>
</gene>
<proteinExistence type="evidence at protein level"/>
<evidence type="ECO:0000250" key="1">
    <source>
        <dbReference type="UniProtKB" id="P05089"/>
    </source>
</evidence>
<evidence type="ECO:0000250" key="2">
    <source>
        <dbReference type="UniProtKB" id="P53608"/>
    </source>
</evidence>
<evidence type="ECO:0000255" key="3">
    <source>
        <dbReference type="PROSITE-ProRule" id="PRU00742"/>
    </source>
</evidence>
<evidence type="ECO:0000269" key="4">
    <source>
    </source>
</evidence>
<evidence type="ECO:0000305" key="5"/>
<name>ARGI_NEUCR</name>
<dbReference type="EC" id="3.5.3.1" evidence="1"/>
<dbReference type="EMBL" id="L20687">
    <property type="protein sequence ID" value="AAC82503.1"/>
    <property type="molecule type" value="Genomic_DNA"/>
</dbReference>
<dbReference type="EMBL" id="L20687">
    <property type="protein sequence ID" value="AAC82504.1"/>
    <property type="molecule type" value="Genomic_DNA"/>
</dbReference>
<dbReference type="EMBL" id="CM002242">
    <property type="protein sequence ID" value="ESA41989.1"/>
    <property type="molecule type" value="Genomic_DNA"/>
</dbReference>
<dbReference type="PIR" id="T47228">
    <property type="entry name" value="T47228"/>
</dbReference>
<dbReference type="PIR" id="T47229">
    <property type="entry name" value="T47229"/>
</dbReference>
<dbReference type="RefSeq" id="XP_011395140.1">
    <molecule id="P33280-1"/>
    <property type="nucleotide sequence ID" value="XM_011396838.1"/>
</dbReference>
<dbReference type="SMR" id="P33280"/>
<dbReference type="FunCoup" id="P33280">
    <property type="interactions" value="1269"/>
</dbReference>
<dbReference type="STRING" id="367110.P33280"/>
<dbReference type="PaxDb" id="5141-EFNCRP00000003109"/>
<dbReference type="EnsemblFungi" id="ESA41989">
    <molecule id="P33280-1"/>
    <property type="protein sequence ID" value="ESA41989"/>
    <property type="gene ID" value="NCU02333"/>
</dbReference>
<dbReference type="GeneID" id="3875906"/>
<dbReference type="KEGG" id="ncr:NCU02333"/>
<dbReference type="VEuPathDB" id="FungiDB:NCU02333"/>
<dbReference type="HOGENOM" id="CLU_039478_6_1_1"/>
<dbReference type="InParanoid" id="P33280"/>
<dbReference type="OMA" id="YKEFRYA"/>
<dbReference type="OrthoDB" id="9992747at2759"/>
<dbReference type="SABIO-RK" id="P33280"/>
<dbReference type="UniPathway" id="UPA00158">
    <property type="reaction ID" value="UER00270"/>
</dbReference>
<dbReference type="Proteomes" id="UP000001805">
    <property type="component" value="Chromosome 7, Linkage Group VII"/>
</dbReference>
<dbReference type="GO" id="GO:0005737">
    <property type="term" value="C:cytoplasm"/>
    <property type="evidence" value="ECO:0000318"/>
    <property type="project" value="GO_Central"/>
</dbReference>
<dbReference type="GO" id="GO:0005829">
    <property type="term" value="C:cytosol"/>
    <property type="evidence" value="ECO:0000318"/>
    <property type="project" value="GO_Central"/>
</dbReference>
<dbReference type="GO" id="GO:0004053">
    <property type="term" value="F:arginase activity"/>
    <property type="evidence" value="ECO:0000318"/>
    <property type="project" value="GO_Central"/>
</dbReference>
<dbReference type="GO" id="GO:0030145">
    <property type="term" value="F:manganese ion binding"/>
    <property type="evidence" value="ECO:0000318"/>
    <property type="project" value="GO_Central"/>
</dbReference>
<dbReference type="GO" id="GO:0019547">
    <property type="term" value="P:arginine catabolic process to ornithine"/>
    <property type="evidence" value="ECO:0000318"/>
    <property type="project" value="GO_Central"/>
</dbReference>
<dbReference type="GO" id="GO:0000050">
    <property type="term" value="P:urea cycle"/>
    <property type="evidence" value="ECO:0007669"/>
    <property type="project" value="UniProtKB-UniPathway"/>
</dbReference>
<dbReference type="CDD" id="cd09989">
    <property type="entry name" value="Arginase"/>
    <property type="match status" value="1"/>
</dbReference>
<dbReference type="FunFam" id="3.40.800.10:FF:000009">
    <property type="entry name" value="Arginase"/>
    <property type="match status" value="1"/>
</dbReference>
<dbReference type="Gene3D" id="3.40.800.10">
    <property type="entry name" value="Ureohydrolase domain"/>
    <property type="match status" value="1"/>
</dbReference>
<dbReference type="InterPro" id="IPR014033">
    <property type="entry name" value="Arginase"/>
</dbReference>
<dbReference type="InterPro" id="IPR006035">
    <property type="entry name" value="Ureohydrolase"/>
</dbReference>
<dbReference type="InterPro" id="IPR023696">
    <property type="entry name" value="Ureohydrolase_dom_sf"/>
</dbReference>
<dbReference type="InterPro" id="IPR020855">
    <property type="entry name" value="Ureohydrolase_Mn_BS"/>
</dbReference>
<dbReference type="NCBIfam" id="TIGR01229">
    <property type="entry name" value="rocF_arginase"/>
    <property type="match status" value="1"/>
</dbReference>
<dbReference type="PANTHER" id="PTHR43782">
    <property type="entry name" value="ARGINASE"/>
    <property type="match status" value="1"/>
</dbReference>
<dbReference type="PANTHER" id="PTHR43782:SF3">
    <property type="entry name" value="ARGINASE"/>
    <property type="match status" value="1"/>
</dbReference>
<dbReference type="Pfam" id="PF00491">
    <property type="entry name" value="Arginase"/>
    <property type="match status" value="1"/>
</dbReference>
<dbReference type="PRINTS" id="PR00116">
    <property type="entry name" value="ARGINASE"/>
</dbReference>
<dbReference type="SUPFAM" id="SSF52768">
    <property type="entry name" value="Arginase/deacetylase"/>
    <property type="match status" value="1"/>
</dbReference>
<dbReference type="PROSITE" id="PS01053">
    <property type="entry name" value="ARGINASE_1"/>
    <property type="match status" value="1"/>
</dbReference>
<dbReference type="PROSITE" id="PS51409">
    <property type="entry name" value="ARGINASE_2"/>
    <property type="match status" value="1"/>
</dbReference>
<accession>P33280</accession>
<accession>Q7RV08</accession>
<accession>Q9URL4</accession>
<accession>V5ILL2</accession>
<sequence>MSPSLVDNHAAAYIAAPSSAKAPMIQKPGNTFGMSSPIESKFLSQPRDLGIVAVGFSGGQCKPGVDAAPSALIESGLLTQLREELGYRLHGDDEVHLYTDLVPKEDPPHRNMKNPRAVSNVTKRIAEQVHSHAKEGRLVLTLGGDHSIAIGTIAGSAKAIKERLGREIAVIWVDAHADINTPETSGSGNIHGMPVSFLTGLASEDKEEFFGWLKPDHLLSVKKLVYIGLRDVDPGEKRILRENGIKAFSMHDIDKHGIGRVMEMALGHIGNDTPIHLSFDVDALDPMWAPSTGTPVRGGLTLREGDFICECVHETGSLVAVDLVEVNPTLAAPNDVGAHETVRAGCSLVRCALGESLL</sequence>
<reference key="1">
    <citation type="journal article" date="1998" name="J. Biol. Chem.">
        <title>Multiple forms of arginase are differentially expressed from a single locus in Neurospora crassa.</title>
        <authorList>
            <person name="Marathe S.V."/>
            <person name="Yu Y.G."/>
            <person name="Turner G.E."/>
            <person name="Palmier C."/>
            <person name="Weiss R.L."/>
        </authorList>
    </citation>
    <scope>NUCLEOTIDE SEQUENCE [GENOMIC DNA]</scope>
    <scope>ALTERNATIVE INITIATION</scope>
    <scope>SUBCELLULAR LOCATION</scope>
    <source>
        <strain>ATCC 24698 / 74-OR23-1A / CBS 708.71 / DSM 1257 / FGSC 987</strain>
    </source>
</reference>
<reference key="2">
    <citation type="journal article" date="2003" name="Nature">
        <title>The genome sequence of the filamentous fungus Neurospora crassa.</title>
        <authorList>
            <person name="Galagan J.E."/>
            <person name="Calvo S.E."/>
            <person name="Borkovich K.A."/>
            <person name="Selker E.U."/>
            <person name="Read N.D."/>
            <person name="Jaffe D.B."/>
            <person name="FitzHugh W."/>
            <person name="Ma L.-J."/>
            <person name="Smirnov S."/>
            <person name="Purcell S."/>
            <person name="Rehman B."/>
            <person name="Elkins T."/>
            <person name="Engels R."/>
            <person name="Wang S."/>
            <person name="Nielsen C.B."/>
            <person name="Butler J."/>
            <person name="Endrizzi M."/>
            <person name="Qui D."/>
            <person name="Ianakiev P."/>
            <person name="Bell-Pedersen D."/>
            <person name="Nelson M.A."/>
            <person name="Werner-Washburne M."/>
            <person name="Selitrennikoff C.P."/>
            <person name="Kinsey J.A."/>
            <person name="Braun E.L."/>
            <person name="Zelter A."/>
            <person name="Schulte U."/>
            <person name="Kothe G.O."/>
            <person name="Jedd G."/>
            <person name="Mewes H.-W."/>
            <person name="Staben C."/>
            <person name="Marcotte E."/>
            <person name="Greenberg D."/>
            <person name="Roy A."/>
            <person name="Foley K."/>
            <person name="Naylor J."/>
            <person name="Stange-Thomann N."/>
            <person name="Barrett R."/>
            <person name="Gnerre S."/>
            <person name="Kamal M."/>
            <person name="Kamvysselis M."/>
            <person name="Mauceli E.W."/>
            <person name="Bielke C."/>
            <person name="Rudd S."/>
            <person name="Frishman D."/>
            <person name="Krystofova S."/>
            <person name="Rasmussen C."/>
            <person name="Metzenberg R.L."/>
            <person name="Perkins D.D."/>
            <person name="Kroken S."/>
            <person name="Cogoni C."/>
            <person name="Macino G."/>
            <person name="Catcheside D.E.A."/>
            <person name="Li W."/>
            <person name="Pratt R.J."/>
            <person name="Osmani S.A."/>
            <person name="DeSouza C.P.C."/>
            <person name="Glass N.L."/>
            <person name="Orbach M.J."/>
            <person name="Berglund J.A."/>
            <person name="Voelker R."/>
            <person name="Yarden O."/>
            <person name="Plamann M."/>
            <person name="Seiler S."/>
            <person name="Dunlap J.C."/>
            <person name="Radford A."/>
            <person name="Aramayo R."/>
            <person name="Natvig D.O."/>
            <person name="Alex L.A."/>
            <person name="Mannhaupt G."/>
            <person name="Ebbole D.J."/>
            <person name="Freitag M."/>
            <person name="Paulsen I."/>
            <person name="Sachs M.S."/>
            <person name="Lander E.S."/>
            <person name="Nusbaum C."/>
            <person name="Birren B.W."/>
        </authorList>
    </citation>
    <scope>NUCLEOTIDE SEQUENCE [LARGE SCALE GENOMIC DNA]</scope>
    <source>
        <strain>ATCC 24698 / 74-OR23-1A / CBS 708.71 / DSM 1257 / FGSC 987</strain>
    </source>
</reference>
<reference key="3">
    <citation type="journal article" date="1987" name="J. Biol. Chem.">
        <title>Purification and characterization of arginase from Neurospora crassa.</title>
        <authorList>
            <person name="Borkovich K.A."/>
            <person name="Weiss R.L."/>
        </authorList>
    </citation>
    <scope>CHARACTERIZATION</scope>
</reference>
<organism>
    <name type="scientific">Neurospora crassa (strain ATCC 24698 / 74-OR23-1A / CBS 708.71 / DSM 1257 / FGSC 987)</name>
    <dbReference type="NCBI Taxonomy" id="367110"/>
    <lineage>
        <taxon>Eukaryota</taxon>
        <taxon>Fungi</taxon>
        <taxon>Dikarya</taxon>
        <taxon>Ascomycota</taxon>
        <taxon>Pezizomycotina</taxon>
        <taxon>Sordariomycetes</taxon>
        <taxon>Sordariomycetidae</taxon>
        <taxon>Sordariales</taxon>
        <taxon>Sordariaceae</taxon>
        <taxon>Neurospora</taxon>
    </lineage>
</organism>
<comment type="catalytic activity">
    <reaction evidence="1">
        <text>L-arginine + H2O = urea + L-ornithine</text>
        <dbReference type="Rhea" id="RHEA:20569"/>
        <dbReference type="ChEBI" id="CHEBI:15377"/>
        <dbReference type="ChEBI" id="CHEBI:16199"/>
        <dbReference type="ChEBI" id="CHEBI:32682"/>
        <dbReference type="ChEBI" id="CHEBI:46911"/>
        <dbReference type="EC" id="3.5.3.1"/>
    </reaction>
</comment>
<comment type="cofactor">
    <cofactor evidence="3">
        <name>Mn(2+)</name>
        <dbReference type="ChEBI" id="CHEBI:29035"/>
    </cofactor>
    <text evidence="3">Binds 2 manganese ions per subunit.</text>
</comment>
<comment type="pathway">
    <text evidence="1">Nitrogen metabolism; urea cycle; L-ornithine and urea from L-arginine: step 1/1.</text>
</comment>
<comment type="subunit">
    <text>Homohexamer.</text>
</comment>
<comment type="subcellular location">
    <subcellularLocation>
        <location evidence="4">Cytoplasm</location>
    </subcellularLocation>
</comment>
<comment type="alternative products">
    <event type="alternative initiation"/>
    <isoform>
        <id>P33280-1</id>
        <name>41 kDa</name>
        <sequence type="displayed"/>
    </isoform>
    <isoform>
        <id>P33280-2</id>
        <name>36 kDa</name>
        <sequence type="described" ref="VSP_018650"/>
    </isoform>
</comment>
<comment type="similarity">
    <text evidence="3">Belongs to the arginase family.</text>
</comment>
<feature type="chain" id="PRO_0000002087" description="Arginase">
    <location>
        <begin position="1"/>
        <end position="358"/>
    </location>
</feature>
<feature type="binding site" evidence="3">
    <location>
        <position position="146"/>
    </location>
    <ligand>
        <name>Mn(2+)</name>
        <dbReference type="ChEBI" id="CHEBI:29035"/>
        <label>1</label>
    </ligand>
</feature>
<feature type="binding site" evidence="3">
    <location>
        <position position="174"/>
    </location>
    <ligand>
        <name>Mn(2+)</name>
        <dbReference type="ChEBI" id="CHEBI:29035"/>
        <label>1</label>
    </ligand>
</feature>
<feature type="binding site" evidence="3">
    <location>
        <position position="174"/>
    </location>
    <ligand>
        <name>Mn(2+)</name>
        <dbReference type="ChEBI" id="CHEBI:29035"/>
        <label>2</label>
    </ligand>
</feature>
<feature type="binding site" evidence="2">
    <location>
        <begin position="176"/>
        <end position="180"/>
    </location>
    <ligand>
        <name>substrate</name>
    </ligand>
</feature>
<feature type="binding site" evidence="3">
    <location>
        <position position="176"/>
    </location>
    <ligand>
        <name>Mn(2+)</name>
        <dbReference type="ChEBI" id="CHEBI:29035"/>
        <label>2</label>
    </ligand>
</feature>
<feature type="binding site" evidence="3">
    <location>
        <position position="178"/>
    </location>
    <ligand>
        <name>Mn(2+)</name>
        <dbReference type="ChEBI" id="CHEBI:29035"/>
        <label>1</label>
    </ligand>
</feature>
<feature type="binding site" evidence="2">
    <location>
        <begin position="187"/>
        <end position="189"/>
    </location>
    <ligand>
        <name>substrate</name>
    </ligand>
</feature>
<feature type="binding site" evidence="2">
    <location>
        <position position="233"/>
    </location>
    <ligand>
        <name>substrate</name>
    </ligand>
</feature>
<feature type="binding site" evidence="3">
    <location>
        <position position="280"/>
    </location>
    <ligand>
        <name>Mn(2+)</name>
        <dbReference type="ChEBI" id="CHEBI:29035"/>
        <label>1</label>
    </ligand>
</feature>
<feature type="binding site" evidence="3">
    <location>
        <position position="280"/>
    </location>
    <ligand>
        <name>Mn(2+)</name>
        <dbReference type="ChEBI" id="CHEBI:29035"/>
        <label>2</label>
    </ligand>
</feature>
<feature type="binding site" evidence="3">
    <location>
        <position position="282"/>
    </location>
    <ligand>
        <name>Mn(2+)</name>
        <dbReference type="ChEBI" id="CHEBI:29035"/>
        <label>2</label>
    </ligand>
</feature>
<feature type="binding site" evidence="2">
    <location>
        <position position="294"/>
    </location>
    <ligand>
        <name>substrate</name>
    </ligand>
</feature>
<feature type="binding site" evidence="2">
    <location>
        <position position="325"/>
    </location>
    <ligand>
        <name>substrate</name>
    </ligand>
</feature>
<feature type="splice variant" id="VSP_018650" description="In isoform 36 kDa." evidence="5">
    <location>
        <begin position="1"/>
        <end position="33"/>
    </location>
</feature>
<feature type="sequence conflict" description="In Ref. 1; AAC82503/AAC82504." evidence="5" ref="1">
    <original>CALGESLL</original>
    <variation>SRSRRNVL</variation>
    <location>
        <begin position="351"/>
        <end position="358"/>
    </location>
</feature>
<protein>
    <recommendedName>
        <fullName>Arginase</fullName>
        <ecNumber evidence="1">3.5.3.1</ecNumber>
    </recommendedName>
</protein>